<accession>Q8EWA4</accession>
<keyword id="KW-1003">Cell membrane</keyword>
<keyword id="KW-0472">Membrane</keyword>
<keyword id="KW-1185">Reference proteome</keyword>
<keyword id="KW-0808">Transferase</keyword>
<keyword id="KW-0812">Transmembrane</keyword>
<keyword id="KW-1133">Transmembrane helix</keyword>
<comment type="function">
    <text evidence="1">Catalyzes the transfer of the diacylglyceryl group from phosphatidylglycerol to the sulfhydryl group of the N-terminal cysteine of a prolipoprotein, the first step in the formation of mature lipoproteins.</text>
</comment>
<comment type="catalytic activity">
    <reaction evidence="1">
        <text>L-cysteinyl-[prolipoprotein] + a 1,2-diacyl-sn-glycero-3-phospho-(1'-sn-glycerol) = an S-1,2-diacyl-sn-glyceryl-L-cysteinyl-[prolipoprotein] + sn-glycerol 1-phosphate + H(+)</text>
        <dbReference type="Rhea" id="RHEA:56712"/>
        <dbReference type="Rhea" id="RHEA-COMP:14679"/>
        <dbReference type="Rhea" id="RHEA-COMP:14680"/>
        <dbReference type="ChEBI" id="CHEBI:15378"/>
        <dbReference type="ChEBI" id="CHEBI:29950"/>
        <dbReference type="ChEBI" id="CHEBI:57685"/>
        <dbReference type="ChEBI" id="CHEBI:64716"/>
        <dbReference type="ChEBI" id="CHEBI:140658"/>
        <dbReference type="EC" id="2.5.1.145"/>
    </reaction>
</comment>
<comment type="pathway">
    <text evidence="1">Protein modification; lipoprotein biosynthesis (diacylglyceryl transfer).</text>
</comment>
<comment type="subcellular location">
    <subcellularLocation>
        <location evidence="1">Cell membrane</location>
        <topology evidence="1">Multi-pass membrane protein</topology>
    </subcellularLocation>
</comment>
<comment type="similarity">
    <text evidence="1">Belongs to the Lgt family.</text>
</comment>
<evidence type="ECO:0000255" key="1">
    <source>
        <dbReference type="HAMAP-Rule" id="MF_01147"/>
    </source>
</evidence>
<feature type="chain" id="PRO_0000172636" description="Phosphatidylglycerol--prolipoprotein diacylglyceryl transferase">
    <location>
        <begin position="1"/>
        <end position="356"/>
    </location>
</feature>
<feature type="transmembrane region" description="Helical" evidence="1">
    <location>
        <begin position="24"/>
        <end position="44"/>
    </location>
</feature>
<feature type="transmembrane region" description="Helical" evidence="1">
    <location>
        <begin position="59"/>
        <end position="79"/>
    </location>
</feature>
<feature type="transmembrane region" description="Helical" evidence="1">
    <location>
        <begin position="103"/>
        <end position="123"/>
    </location>
</feature>
<feature type="transmembrane region" description="Helical" evidence="1">
    <location>
        <begin position="144"/>
        <end position="164"/>
    </location>
</feature>
<feature type="transmembrane region" description="Helical" evidence="1">
    <location>
        <begin position="209"/>
        <end position="229"/>
    </location>
</feature>
<feature type="transmembrane region" description="Helical" evidence="1">
    <location>
        <begin position="265"/>
        <end position="285"/>
    </location>
</feature>
<feature type="binding site" evidence="1">
    <location>
        <position position="165"/>
    </location>
    <ligand>
        <name>a 1,2-diacyl-sn-glycero-3-phospho-(1'-sn-glycerol)</name>
        <dbReference type="ChEBI" id="CHEBI:64716"/>
    </ligand>
</feature>
<gene>
    <name evidence="1" type="primary">lgt</name>
    <name type="ordered locus">MYPE3000</name>
</gene>
<proteinExistence type="inferred from homology"/>
<sequence length="356" mass="41338">MTMNNFTTTMQDISTAFTIGSLEIKWYGIFITVGFVLAIILACVKLEKWYKISCNPFYWFVFIGIPVSLLGARIWSFIIGDASKSLATQNFFAAFFNFREGGLAIEGGVLLTVIAALIYFPLVLKKPQYNVKTKIGNEYYVKQVSMWVYADAIVPCILVGQIIGRWGNFFNQEVYGPIATEAELAWLKTLMPGVYNNMFITTTGNLHHPFFLYESFINFWFFLAIYIGGEFIKKRKAGDLAIAYFICYGLLRSCMEPFRYSDYQFATSIVMSVLFALFGIILLVCNHLVFSKHRDFKFWEFIIYKTKKFFKQDIKEFLDSKRNADNLKVQKQINKNITKEPNFYRKPSEIFYYNGY</sequence>
<dbReference type="EC" id="2.5.1.145" evidence="1"/>
<dbReference type="EMBL" id="BA000026">
    <property type="protein sequence ID" value="BAC44092.1"/>
    <property type="molecule type" value="Genomic_DNA"/>
</dbReference>
<dbReference type="SMR" id="Q8EWA4"/>
<dbReference type="FunCoup" id="Q8EWA4">
    <property type="interactions" value="118"/>
</dbReference>
<dbReference type="STRING" id="272633.gene:10731403"/>
<dbReference type="KEGG" id="mpe:MYPE3000"/>
<dbReference type="eggNOG" id="COG0682">
    <property type="taxonomic scope" value="Bacteria"/>
</dbReference>
<dbReference type="HOGENOM" id="CLU_013386_0_2_14"/>
<dbReference type="InParanoid" id="Q8EWA4"/>
<dbReference type="UniPathway" id="UPA00664"/>
<dbReference type="Proteomes" id="UP000002522">
    <property type="component" value="Chromosome"/>
</dbReference>
<dbReference type="GO" id="GO:0005886">
    <property type="term" value="C:plasma membrane"/>
    <property type="evidence" value="ECO:0007669"/>
    <property type="project" value="UniProtKB-SubCell"/>
</dbReference>
<dbReference type="GO" id="GO:0008961">
    <property type="term" value="F:phosphatidylglycerol-prolipoprotein diacylglyceryl transferase activity"/>
    <property type="evidence" value="ECO:0007669"/>
    <property type="project" value="UniProtKB-UniRule"/>
</dbReference>
<dbReference type="GO" id="GO:0042158">
    <property type="term" value="P:lipoprotein biosynthetic process"/>
    <property type="evidence" value="ECO:0007669"/>
    <property type="project" value="UniProtKB-UniRule"/>
</dbReference>
<dbReference type="HAMAP" id="MF_01147">
    <property type="entry name" value="Lgt"/>
    <property type="match status" value="1"/>
</dbReference>
<dbReference type="InterPro" id="IPR001640">
    <property type="entry name" value="Lgt"/>
</dbReference>
<dbReference type="NCBIfam" id="TIGR00544">
    <property type="entry name" value="lgt"/>
    <property type="match status" value="1"/>
</dbReference>
<dbReference type="PANTHER" id="PTHR30589:SF0">
    <property type="entry name" value="PHOSPHATIDYLGLYCEROL--PROLIPOPROTEIN DIACYLGLYCERYL TRANSFERASE"/>
    <property type="match status" value="1"/>
</dbReference>
<dbReference type="PANTHER" id="PTHR30589">
    <property type="entry name" value="PROLIPOPROTEIN DIACYLGLYCERYL TRANSFERASE"/>
    <property type="match status" value="1"/>
</dbReference>
<dbReference type="Pfam" id="PF01790">
    <property type="entry name" value="LGT"/>
    <property type="match status" value="1"/>
</dbReference>
<dbReference type="PROSITE" id="PS01311">
    <property type="entry name" value="LGT"/>
    <property type="match status" value="1"/>
</dbReference>
<organism>
    <name type="scientific">Malacoplasma penetrans (strain HF-2)</name>
    <name type="common">Mycoplasma penetrans</name>
    <dbReference type="NCBI Taxonomy" id="272633"/>
    <lineage>
        <taxon>Bacteria</taxon>
        <taxon>Bacillati</taxon>
        <taxon>Mycoplasmatota</taxon>
        <taxon>Mycoplasmoidales</taxon>
        <taxon>Mycoplasmoidaceae</taxon>
        <taxon>Malacoplasma</taxon>
    </lineage>
</organism>
<name>LGT_MALP2</name>
<reference key="1">
    <citation type="journal article" date="2002" name="Nucleic Acids Res.">
        <title>The complete genomic sequence of Mycoplasma penetrans, an intracellular bacterial pathogen in humans.</title>
        <authorList>
            <person name="Sasaki Y."/>
            <person name="Ishikawa J."/>
            <person name="Yamashita A."/>
            <person name="Oshima K."/>
            <person name="Kenri T."/>
            <person name="Furuya K."/>
            <person name="Yoshino C."/>
            <person name="Horino A."/>
            <person name="Shiba T."/>
            <person name="Sasaki T."/>
            <person name="Hattori M."/>
        </authorList>
    </citation>
    <scope>NUCLEOTIDE SEQUENCE [LARGE SCALE GENOMIC DNA]</scope>
    <source>
        <strain>HF-2</strain>
    </source>
</reference>
<protein>
    <recommendedName>
        <fullName evidence="1">Phosphatidylglycerol--prolipoprotein diacylglyceryl transferase</fullName>
        <ecNumber evidence="1">2.5.1.145</ecNumber>
    </recommendedName>
</protein>